<name>HFB22_TRIA4</name>
<dbReference type="EMBL" id="KZ679260">
    <property type="protein sequence ID" value="PTB42336.1"/>
    <property type="molecule type" value="Genomic_DNA"/>
</dbReference>
<dbReference type="OrthoDB" id="4897295at2759"/>
<dbReference type="Proteomes" id="UP000240493">
    <property type="component" value="Unassembled WGS sequence"/>
</dbReference>
<dbReference type="GO" id="GO:0005576">
    <property type="term" value="C:extracellular region"/>
    <property type="evidence" value="ECO:0007669"/>
    <property type="project" value="UniProtKB-KW"/>
</dbReference>
<dbReference type="CDD" id="cd23508">
    <property type="entry name" value="hydrophobin_II"/>
    <property type="match status" value="1"/>
</dbReference>
<dbReference type="Gene3D" id="3.20.120.10">
    <property type="entry name" value="Hydrophobin"/>
    <property type="match status" value="1"/>
</dbReference>
<dbReference type="InterPro" id="IPR010636">
    <property type="entry name" value="Cerato-ulmin_hydrophobin"/>
</dbReference>
<dbReference type="InterPro" id="IPR036686">
    <property type="entry name" value="Hydrophobin_sf"/>
</dbReference>
<dbReference type="Pfam" id="PF06766">
    <property type="entry name" value="Hydrophobin_2"/>
    <property type="match status" value="1"/>
</dbReference>
<dbReference type="SUPFAM" id="SSF101751">
    <property type="entry name" value="Hydrophobin II, HfbII"/>
    <property type="match status" value="1"/>
</dbReference>
<organism>
    <name type="scientific">Trichoderma asperellum (strain ATCC 204424 / CBS 433.97 / NBRC 101777)</name>
    <dbReference type="NCBI Taxonomy" id="1042311"/>
    <lineage>
        <taxon>Eukaryota</taxon>
        <taxon>Fungi</taxon>
        <taxon>Dikarya</taxon>
        <taxon>Ascomycota</taxon>
        <taxon>Pezizomycotina</taxon>
        <taxon>Sordariomycetes</taxon>
        <taxon>Hypocreomycetidae</taxon>
        <taxon>Hypocreales</taxon>
        <taxon>Hypocreaceae</taxon>
        <taxon>Trichoderma</taxon>
    </lineage>
</organism>
<proteinExistence type="evidence at transcript level"/>
<gene>
    <name evidence="4" type="primary">HFB2-2</name>
    <name type="ORF">M441DRAFT_57108</name>
</gene>
<protein>
    <recommendedName>
        <fullName evidence="4">Class II hydrophobin 2</fullName>
    </recommendedName>
</protein>
<keyword id="KW-0134">Cell wall</keyword>
<keyword id="KW-1015">Disulfide bond</keyword>
<keyword id="KW-1185">Reference proteome</keyword>
<keyword id="KW-0964">Secreted</keyword>
<keyword id="KW-0732">Signal</keyword>
<sequence length="89" mass="8947">MKLYIAAALLTLGLAAPITETESHSIASRGSFSCPGGLINSSPMCCSVNVLGLLALDCRNVGPDGCVGSSKPNCCTLGTAGQGLICNEM</sequence>
<evidence type="ECO:0000250" key="1">
    <source>
        <dbReference type="UniProtKB" id="P79073"/>
    </source>
</evidence>
<evidence type="ECO:0000255" key="2"/>
<evidence type="ECO:0000269" key="3">
    <source>
    </source>
</evidence>
<evidence type="ECO:0000303" key="4">
    <source>
    </source>
</evidence>
<evidence type="ECO:0000305" key="5"/>
<feature type="signal peptide" evidence="2">
    <location>
        <begin position="1"/>
        <end position="15"/>
    </location>
</feature>
<feature type="chain" id="PRO_5015774860" description="Class II hydrophobin 2">
    <location>
        <begin position="16"/>
        <end position="89"/>
    </location>
</feature>
<feature type="disulfide bond" evidence="1">
    <location>
        <begin position="34"/>
        <end position="74"/>
    </location>
</feature>
<feature type="disulfide bond" evidence="1">
    <location>
        <begin position="45"/>
        <end position="66"/>
    </location>
</feature>
<feature type="disulfide bond" evidence="1">
    <location>
        <begin position="46"/>
        <end position="58"/>
    </location>
</feature>
<feature type="disulfide bond" evidence="1">
    <location>
        <begin position="75"/>
        <end position="86"/>
    </location>
</feature>
<accession>A0A2T3ZC06</accession>
<reference key="1">
    <citation type="submission" date="2016-07" db="EMBL/GenBank/DDBJ databases">
        <title>Multiple horizontal gene transfer events from other fungi enriched the ability of initially mycotrophic Trichoderma (Ascomycota) to feed on dead plant biomass.</title>
        <authorList>
            <consortium name="DOE Joint Genome Institute"/>
            <person name="Aerts A."/>
            <person name="Atanasova L."/>
            <person name="Chenthamara K."/>
            <person name="Zhang J."/>
            <person name="Grujic M."/>
            <person name="Henrissat B."/>
            <person name="Kuo A."/>
            <person name="Salamov A."/>
            <person name="Lipzen A."/>
            <person name="Labutti K."/>
            <person name="Barry K."/>
            <person name="Miao Y."/>
            <person name="Rahimi M.J."/>
            <person name="Shen Q."/>
            <person name="Grigoriev I.V."/>
            <person name="Kubicek C.P."/>
            <person name="Druzhinina I.S."/>
        </authorList>
    </citation>
    <scope>NUCLEOTIDE SEQUENCE [LARGE SCALE GENOMIC DNA]</scope>
    <source>
        <strain>ATCC 204424 / CBS 433.97 / NBRC 101777</strain>
    </source>
</reference>
<reference key="2">
    <citation type="journal article" date="2015" name="Microbiol. Res.">
        <title>Functional analysis of the class II hydrophobin gene HFB2-6 from the biocontrol agent Trichoderma asperellum ACCC30536.</title>
        <authorList>
            <person name="Huang Y."/>
            <person name="Mijiti G."/>
            <person name="Wang Z."/>
            <person name="Yu W."/>
            <person name="Fan H."/>
            <person name="Zhang R."/>
            <person name="Liu Z."/>
        </authorList>
    </citation>
    <scope>INDUCTION</scope>
</reference>
<comment type="function">
    <text evidence="5">Aerial growth, conidiation, and dispersal of filamentous fungi in the environment rely upon a capability of their secreting small amphipathic proteins called hydrophobins (HPBs) with low sequence identity. Class I can self-assemble into an outermost layer of rodlet bundles on aerial cell surfaces, conferring cellular hydrophobicity that supports fungal growth, development and dispersal; whereas Class II form highly ordered films at water-air interfaces through intermolecular interactions but contribute nothing to the rodlet structure.</text>
</comment>
<comment type="subunit">
    <text evidence="1">Homodimer (By similarity). Homodimers further self-assemble to form highly ordered films at water-air interfaces through intermolecular interactions (By similarity).</text>
</comment>
<comment type="subcellular location">
    <subcellularLocation>
        <location evidence="1">Secreted</location>
    </subcellularLocation>
    <subcellularLocation>
        <location evidence="1">Secreted</location>
        <location evidence="1">Cell wall</location>
    </subcellularLocation>
</comment>
<comment type="induction">
    <text evidence="3">Expression is slightly induced in the presence of root and stem powder of Shanxin poplar, as well as during carbon or nitrogen starvation.</text>
</comment>
<comment type="similarity">
    <text evidence="5">Belongs to the cerato-ulmin hydrophobin family.</text>
</comment>